<name>NEUL3_HUMAN</name>
<sequence length="262" mass="28789">MGAQLCFEANAKAPREALRFHAEAKGAQVRLDTRGCIAHRRTTFHDGIVFSQRPVRLGERVALRVLREESGWCGGLRVGFTRLDPACVSVPSLPPFLCPDLEEQSPTWAAVLPEGCALTGDLVRFWVDRRGCLFAKVNAGCRLLLREGVPVGAPLWAVMDVYGTTKAIELLDPTASRLPTPMPWDLSNKAVPEPKATPGEECAICFYHAANTRLVPCGHTYFCRYCAWRVFSDTAKCPVCRWQIEAVAPAQGPPALRVEEGS</sequence>
<dbReference type="EC" id="2.3.2.27" evidence="5"/>
<dbReference type="EMBL" id="AC013270">
    <property type="status" value="NOT_ANNOTATED_CDS"/>
    <property type="molecule type" value="Genomic_DNA"/>
</dbReference>
<dbReference type="EMBL" id="AC021188">
    <property type="status" value="NOT_ANNOTATED_CDS"/>
    <property type="molecule type" value="Genomic_DNA"/>
</dbReference>
<dbReference type="EMBL" id="AK311953">
    <property type="status" value="NOT_ANNOTATED_CDS"/>
    <property type="molecule type" value="mRNA"/>
</dbReference>
<dbReference type="CCDS" id="CCDS74542.1"/>
<dbReference type="RefSeq" id="NP_001272414.1">
    <property type="nucleotide sequence ID" value="NM_001285485.2"/>
</dbReference>
<dbReference type="RefSeq" id="XP_011510480.1">
    <property type="nucleotide sequence ID" value="XM_011512178.3"/>
</dbReference>
<dbReference type="RefSeq" id="XP_011510481.1">
    <property type="nucleotide sequence ID" value="XM_011512179.3"/>
</dbReference>
<dbReference type="RefSeq" id="XP_054200551.1">
    <property type="nucleotide sequence ID" value="XM_054344576.1"/>
</dbReference>
<dbReference type="RefSeq" id="XP_054200552.1">
    <property type="nucleotide sequence ID" value="XM_054344577.1"/>
</dbReference>
<dbReference type="SMR" id="Q96EH8"/>
<dbReference type="BioGRID" id="124999">
    <property type="interactions" value="4"/>
</dbReference>
<dbReference type="FunCoup" id="Q96EH8">
    <property type="interactions" value="139"/>
</dbReference>
<dbReference type="STRING" id="9606.ENSP00000478591"/>
<dbReference type="PhosphoSitePlus" id="Q96EH8"/>
<dbReference type="BioMuta" id="NEURL3"/>
<dbReference type="DMDM" id="172045848"/>
<dbReference type="MassIVE" id="Q96EH8"/>
<dbReference type="PaxDb" id="9606-ENSP00000478591"/>
<dbReference type="PeptideAtlas" id="Q96EH8"/>
<dbReference type="ProteomicsDB" id="76409"/>
<dbReference type="Antibodypedia" id="74844">
    <property type="antibodies" value="27 antibodies from 8 providers"/>
</dbReference>
<dbReference type="DNASU" id="93082"/>
<dbReference type="Ensembl" id="ENST00000451794.6">
    <property type="protein sequence ID" value="ENSP00000478591.1"/>
    <property type="gene ID" value="ENSG00000163121.10"/>
</dbReference>
<dbReference type="GeneID" id="93082"/>
<dbReference type="KEGG" id="hsa:93082"/>
<dbReference type="MANE-Select" id="ENST00000451794.6">
    <property type="protein sequence ID" value="ENSP00000478591.1"/>
    <property type="RefSeq nucleotide sequence ID" value="NM_001285485.2"/>
    <property type="RefSeq protein sequence ID" value="NP_001272414.1"/>
</dbReference>
<dbReference type="UCSC" id="uc010yup.3">
    <property type="organism name" value="human"/>
</dbReference>
<dbReference type="AGR" id="HGNC:25162"/>
<dbReference type="CTD" id="93082"/>
<dbReference type="DisGeNET" id="93082"/>
<dbReference type="GeneCards" id="NEURL3"/>
<dbReference type="HGNC" id="HGNC:25162">
    <property type="gene designation" value="NEURL3"/>
</dbReference>
<dbReference type="HPA" id="ENSG00000163121">
    <property type="expression patterns" value="Group enriched (kidney, pancreas, salivary gland)"/>
</dbReference>
<dbReference type="neXtProt" id="NX_Q96EH8"/>
<dbReference type="OpenTargets" id="ENSG00000163121"/>
<dbReference type="VEuPathDB" id="HostDB:ENSG00000163121"/>
<dbReference type="eggNOG" id="KOG4625">
    <property type="taxonomic scope" value="Eukaryota"/>
</dbReference>
<dbReference type="GeneTree" id="ENSGT00940000162540"/>
<dbReference type="HOGENOM" id="CLU_090535_0_0_1"/>
<dbReference type="InParanoid" id="Q96EH8"/>
<dbReference type="OMA" id="HTHFCSS"/>
<dbReference type="OrthoDB" id="6078042at2759"/>
<dbReference type="PAN-GO" id="Q96EH8">
    <property type="GO annotations" value="1 GO annotation based on evolutionary models"/>
</dbReference>
<dbReference type="PhylomeDB" id="Q96EH8"/>
<dbReference type="PathwayCommons" id="Q96EH8"/>
<dbReference type="SignaLink" id="Q96EH8"/>
<dbReference type="SIGNOR" id="Q96EH8"/>
<dbReference type="UniPathway" id="UPA00143"/>
<dbReference type="BioGRID-ORCS" id="93082">
    <property type="hits" value="3 hits in 205 CRISPR screens"/>
</dbReference>
<dbReference type="GenomeRNAi" id="93082"/>
<dbReference type="Pharos" id="Q96EH8">
    <property type="development level" value="Tdark"/>
</dbReference>
<dbReference type="PRO" id="PR:Q96EH8"/>
<dbReference type="Proteomes" id="UP000005640">
    <property type="component" value="Chromosome 2"/>
</dbReference>
<dbReference type="RNAct" id="Q96EH8">
    <property type="molecule type" value="protein"/>
</dbReference>
<dbReference type="Bgee" id="ENSG00000163121">
    <property type="expression patterns" value="Expressed in nasal cavity epithelium and 131 other cell types or tissues"/>
</dbReference>
<dbReference type="ExpressionAtlas" id="Q96EH8">
    <property type="expression patterns" value="baseline and differential"/>
</dbReference>
<dbReference type="GO" id="GO:0005737">
    <property type="term" value="C:cytoplasm"/>
    <property type="evidence" value="ECO:0000314"/>
    <property type="project" value="UniProt"/>
</dbReference>
<dbReference type="GO" id="GO:0005769">
    <property type="term" value="C:early endosome"/>
    <property type="evidence" value="ECO:0000318"/>
    <property type="project" value="GO_Central"/>
</dbReference>
<dbReference type="GO" id="GO:0061630">
    <property type="term" value="F:ubiquitin protein ligase activity"/>
    <property type="evidence" value="ECO:0000314"/>
    <property type="project" value="UniProt"/>
</dbReference>
<dbReference type="GO" id="GO:0008270">
    <property type="term" value="F:zinc ion binding"/>
    <property type="evidence" value="ECO:0007669"/>
    <property type="project" value="UniProtKB-KW"/>
</dbReference>
<dbReference type="GO" id="GO:0045087">
    <property type="term" value="P:innate immune response"/>
    <property type="evidence" value="ECO:0007669"/>
    <property type="project" value="UniProtKB-KW"/>
</dbReference>
<dbReference type="GO" id="GO:1901800">
    <property type="term" value="P:positive regulation of proteasomal protein catabolic process"/>
    <property type="evidence" value="ECO:0000314"/>
    <property type="project" value="UniProt"/>
</dbReference>
<dbReference type="GO" id="GO:0016567">
    <property type="term" value="P:protein ubiquitination"/>
    <property type="evidence" value="ECO:0007669"/>
    <property type="project" value="UniProtKB-UniPathway"/>
</dbReference>
<dbReference type="GO" id="GO:0070086">
    <property type="term" value="P:ubiquitin-dependent endocytosis"/>
    <property type="evidence" value="ECO:0000318"/>
    <property type="project" value="GO_Central"/>
</dbReference>
<dbReference type="CDD" id="cd16552">
    <property type="entry name" value="RING-HC_NEURL3"/>
    <property type="match status" value="1"/>
</dbReference>
<dbReference type="FunFam" id="2.60.120.920:FF:000050">
    <property type="entry name" value="Neuralized E3 ubiquitin protein ligase 3"/>
    <property type="match status" value="1"/>
</dbReference>
<dbReference type="FunFam" id="3.30.40.10:FF:000527">
    <property type="entry name" value="Neuralized E3 ubiquitin protein ligase 3"/>
    <property type="match status" value="1"/>
</dbReference>
<dbReference type="Gene3D" id="2.60.120.920">
    <property type="match status" value="1"/>
</dbReference>
<dbReference type="Gene3D" id="3.30.40.10">
    <property type="entry name" value="Zinc/RING finger domain, C3HC4 (zinc finger)"/>
    <property type="match status" value="1"/>
</dbReference>
<dbReference type="InterPro" id="IPR043136">
    <property type="entry name" value="B30.2/SPRY_sf"/>
</dbReference>
<dbReference type="InterPro" id="IPR037962">
    <property type="entry name" value="Neuralized"/>
</dbReference>
<dbReference type="InterPro" id="IPR006573">
    <property type="entry name" value="NHR_dom"/>
</dbReference>
<dbReference type="InterPro" id="IPR001841">
    <property type="entry name" value="Znf_RING"/>
</dbReference>
<dbReference type="InterPro" id="IPR013083">
    <property type="entry name" value="Znf_RING/FYVE/PHD"/>
</dbReference>
<dbReference type="PANTHER" id="PTHR12429">
    <property type="entry name" value="NEURALIZED"/>
    <property type="match status" value="1"/>
</dbReference>
<dbReference type="PANTHER" id="PTHR12429:SF8">
    <property type="entry name" value="NEURALIZED-LIKE PROTEIN 2"/>
    <property type="match status" value="1"/>
</dbReference>
<dbReference type="Pfam" id="PF07177">
    <property type="entry name" value="Neuralized"/>
    <property type="match status" value="1"/>
</dbReference>
<dbReference type="Pfam" id="PF13920">
    <property type="entry name" value="zf-C3HC4_3"/>
    <property type="match status" value="1"/>
</dbReference>
<dbReference type="SMART" id="SM00588">
    <property type="entry name" value="NEUZ"/>
    <property type="match status" value="1"/>
</dbReference>
<dbReference type="SMART" id="SM00184">
    <property type="entry name" value="RING"/>
    <property type="match status" value="1"/>
</dbReference>
<dbReference type="SUPFAM" id="SSF57850">
    <property type="entry name" value="RING/U-box"/>
    <property type="match status" value="1"/>
</dbReference>
<dbReference type="PROSITE" id="PS51065">
    <property type="entry name" value="NHR"/>
    <property type="match status" value="1"/>
</dbReference>
<dbReference type="PROSITE" id="PS50089">
    <property type="entry name" value="ZF_RING_2"/>
    <property type="match status" value="1"/>
</dbReference>
<reference key="1">
    <citation type="journal article" date="2005" name="Nature">
        <title>Generation and annotation of the DNA sequences of human chromosomes 2 and 4.</title>
        <authorList>
            <person name="Hillier L.W."/>
            <person name="Graves T.A."/>
            <person name="Fulton R.S."/>
            <person name="Fulton L.A."/>
            <person name="Pepin K.H."/>
            <person name="Minx P."/>
            <person name="Wagner-McPherson C."/>
            <person name="Layman D."/>
            <person name="Wylie K."/>
            <person name="Sekhon M."/>
            <person name="Becker M.C."/>
            <person name="Fewell G.A."/>
            <person name="Delehaunty K.D."/>
            <person name="Miner T.L."/>
            <person name="Nash W.E."/>
            <person name="Kremitzki C."/>
            <person name="Oddy L."/>
            <person name="Du H."/>
            <person name="Sun H."/>
            <person name="Bradshaw-Cordum H."/>
            <person name="Ali J."/>
            <person name="Carter J."/>
            <person name="Cordes M."/>
            <person name="Harris A."/>
            <person name="Isak A."/>
            <person name="van Brunt A."/>
            <person name="Nguyen C."/>
            <person name="Du F."/>
            <person name="Courtney L."/>
            <person name="Kalicki J."/>
            <person name="Ozersky P."/>
            <person name="Abbott S."/>
            <person name="Armstrong J."/>
            <person name="Belter E.A."/>
            <person name="Caruso L."/>
            <person name="Cedroni M."/>
            <person name="Cotton M."/>
            <person name="Davidson T."/>
            <person name="Desai A."/>
            <person name="Elliott G."/>
            <person name="Erb T."/>
            <person name="Fronick C."/>
            <person name="Gaige T."/>
            <person name="Haakenson W."/>
            <person name="Haglund K."/>
            <person name="Holmes A."/>
            <person name="Harkins R."/>
            <person name="Kim K."/>
            <person name="Kruchowski S.S."/>
            <person name="Strong C.M."/>
            <person name="Grewal N."/>
            <person name="Goyea E."/>
            <person name="Hou S."/>
            <person name="Levy A."/>
            <person name="Martinka S."/>
            <person name="Mead K."/>
            <person name="McLellan M.D."/>
            <person name="Meyer R."/>
            <person name="Randall-Maher J."/>
            <person name="Tomlinson C."/>
            <person name="Dauphin-Kohlberg S."/>
            <person name="Kozlowicz-Reilly A."/>
            <person name="Shah N."/>
            <person name="Swearengen-Shahid S."/>
            <person name="Snider J."/>
            <person name="Strong J.T."/>
            <person name="Thompson J."/>
            <person name="Yoakum M."/>
            <person name="Leonard S."/>
            <person name="Pearman C."/>
            <person name="Trani L."/>
            <person name="Radionenko M."/>
            <person name="Waligorski J.E."/>
            <person name="Wang C."/>
            <person name="Rock S.M."/>
            <person name="Tin-Wollam A.-M."/>
            <person name="Maupin R."/>
            <person name="Latreille P."/>
            <person name="Wendl M.C."/>
            <person name="Yang S.-P."/>
            <person name="Pohl C."/>
            <person name="Wallis J.W."/>
            <person name="Spieth J."/>
            <person name="Bieri T.A."/>
            <person name="Berkowicz N."/>
            <person name="Nelson J.O."/>
            <person name="Osborne J."/>
            <person name="Ding L."/>
            <person name="Meyer R."/>
            <person name="Sabo A."/>
            <person name="Shotland Y."/>
            <person name="Sinha P."/>
            <person name="Wohldmann P.E."/>
            <person name="Cook L.L."/>
            <person name="Hickenbotham M.T."/>
            <person name="Eldred J."/>
            <person name="Williams D."/>
            <person name="Jones T.A."/>
            <person name="She X."/>
            <person name="Ciccarelli F.D."/>
            <person name="Izaurralde E."/>
            <person name="Taylor J."/>
            <person name="Schmutz J."/>
            <person name="Myers R.M."/>
            <person name="Cox D.R."/>
            <person name="Huang X."/>
            <person name="McPherson J.D."/>
            <person name="Mardis E.R."/>
            <person name="Clifton S.W."/>
            <person name="Warren W.C."/>
            <person name="Chinwalla A.T."/>
            <person name="Eddy S.R."/>
            <person name="Marra M.A."/>
            <person name="Ovcharenko I."/>
            <person name="Furey T.S."/>
            <person name="Miller W."/>
            <person name="Eichler E.E."/>
            <person name="Bork P."/>
            <person name="Suyama M."/>
            <person name="Torrents D."/>
            <person name="Waterston R.H."/>
            <person name="Wilson R.K."/>
        </authorList>
    </citation>
    <scope>NUCLEOTIDE SEQUENCE [LARGE SCALE GENOMIC DNA]</scope>
</reference>
<reference key="2">
    <citation type="journal article" date="2004" name="Nat. Genet.">
        <title>Complete sequencing and characterization of 21,243 full-length human cDNAs.</title>
        <authorList>
            <person name="Ota T."/>
            <person name="Suzuki Y."/>
            <person name="Nishikawa T."/>
            <person name="Otsuki T."/>
            <person name="Sugiyama T."/>
            <person name="Irie R."/>
            <person name="Wakamatsu A."/>
            <person name="Hayashi K."/>
            <person name="Sato H."/>
            <person name="Nagai K."/>
            <person name="Kimura K."/>
            <person name="Makita H."/>
            <person name="Sekine M."/>
            <person name="Obayashi M."/>
            <person name="Nishi T."/>
            <person name="Shibahara T."/>
            <person name="Tanaka T."/>
            <person name="Ishii S."/>
            <person name="Yamamoto J."/>
            <person name="Saito K."/>
            <person name="Kawai Y."/>
            <person name="Isono Y."/>
            <person name="Nakamura Y."/>
            <person name="Nagahari K."/>
            <person name="Murakami K."/>
            <person name="Yasuda T."/>
            <person name="Iwayanagi T."/>
            <person name="Wagatsuma M."/>
            <person name="Shiratori A."/>
            <person name="Sudo H."/>
            <person name="Hosoiri T."/>
            <person name="Kaku Y."/>
            <person name="Kodaira H."/>
            <person name="Kondo H."/>
            <person name="Sugawara M."/>
            <person name="Takahashi M."/>
            <person name="Kanda K."/>
            <person name="Yokoi T."/>
            <person name="Furuya T."/>
            <person name="Kikkawa E."/>
            <person name="Omura Y."/>
            <person name="Abe K."/>
            <person name="Kamihara K."/>
            <person name="Katsuta N."/>
            <person name="Sato K."/>
            <person name="Tanikawa M."/>
            <person name="Yamazaki M."/>
            <person name="Ninomiya K."/>
            <person name="Ishibashi T."/>
            <person name="Yamashita H."/>
            <person name="Murakawa K."/>
            <person name="Fujimori K."/>
            <person name="Tanai H."/>
            <person name="Kimata M."/>
            <person name="Watanabe M."/>
            <person name="Hiraoka S."/>
            <person name="Chiba Y."/>
            <person name="Ishida S."/>
            <person name="Ono Y."/>
            <person name="Takiguchi S."/>
            <person name="Watanabe S."/>
            <person name="Yosida M."/>
            <person name="Hotuta T."/>
            <person name="Kusano J."/>
            <person name="Kanehori K."/>
            <person name="Takahashi-Fujii A."/>
            <person name="Hara H."/>
            <person name="Tanase T.-O."/>
            <person name="Nomura Y."/>
            <person name="Togiya S."/>
            <person name="Komai F."/>
            <person name="Hara R."/>
            <person name="Takeuchi K."/>
            <person name="Arita M."/>
            <person name="Imose N."/>
            <person name="Musashino K."/>
            <person name="Yuuki H."/>
            <person name="Oshima A."/>
            <person name="Sasaki N."/>
            <person name="Aotsuka S."/>
            <person name="Yoshikawa Y."/>
            <person name="Matsunawa H."/>
            <person name="Ichihara T."/>
            <person name="Shiohata N."/>
            <person name="Sano S."/>
            <person name="Moriya S."/>
            <person name="Momiyama H."/>
            <person name="Satoh N."/>
            <person name="Takami S."/>
            <person name="Terashima Y."/>
            <person name="Suzuki O."/>
            <person name="Nakagawa S."/>
            <person name="Senoh A."/>
            <person name="Mizoguchi H."/>
            <person name="Goto Y."/>
            <person name="Shimizu F."/>
            <person name="Wakebe H."/>
            <person name="Hishigaki H."/>
            <person name="Watanabe T."/>
            <person name="Sugiyama A."/>
            <person name="Takemoto M."/>
            <person name="Kawakami B."/>
            <person name="Yamazaki M."/>
            <person name="Watanabe K."/>
            <person name="Kumagai A."/>
            <person name="Itakura S."/>
            <person name="Fukuzumi Y."/>
            <person name="Fujimori Y."/>
            <person name="Komiyama M."/>
            <person name="Tashiro H."/>
            <person name="Tanigami A."/>
            <person name="Fujiwara T."/>
            <person name="Ono T."/>
            <person name="Yamada K."/>
            <person name="Fujii Y."/>
            <person name="Ozaki K."/>
            <person name="Hirao M."/>
            <person name="Ohmori Y."/>
            <person name="Kawabata A."/>
            <person name="Hikiji T."/>
            <person name="Kobatake N."/>
            <person name="Inagaki H."/>
            <person name="Ikema Y."/>
            <person name="Okamoto S."/>
            <person name="Okitani R."/>
            <person name="Kawakami T."/>
            <person name="Noguchi S."/>
            <person name="Itoh T."/>
            <person name="Shigeta K."/>
            <person name="Senba T."/>
            <person name="Matsumura K."/>
            <person name="Nakajima Y."/>
            <person name="Mizuno T."/>
            <person name="Morinaga M."/>
            <person name="Sasaki M."/>
            <person name="Togashi T."/>
            <person name="Oyama M."/>
            <person name="Hata H."/>
            <person name="Watanabe M."/>
            <person name="Komatsu T."/>
            <person name="Mizushima-Sugano J."/>
            <person name="Satoh T."/>
            <person name="Shirai Y."/>
            <person name="Takahashi Y."/>
            <person name="Nakagawa K."/>
            <person name="Okumura K."/>
            <person name="Nagase T."/>
            <person name="Nomura N."/>
            <person name="Kikuchi H."/>
            <person name="Masuho Y."/>
            <person name="Yamashita R."/>
            <person name="Nakai K."/>
            <person name="Yada T."/>
            <person name="Nakamura Y."/>
            <person name="Ohara O."/>
            <person name="Isogai T."/>
            <person name="Sugano S."/>
        </authorList>
    </citation>
    <scope>NUCLEOTIDE SEQUENCE [LARGE SCALE MRNA] OF 1-158</scope>
    <source>
        <tissue>Thymus</tissue>
    </source>
</reference>
<reference key="3">
    <citation type="journal article" date="2018" name="J. Virol.">
        <title>Neuralized E3 Ubiquitin Protein Ligase 3 Is an Inducible Antiviral Effector That Inhibits Hepatitis C Virus Assembly by Targeting Viral E1 Glycoprotein.</title>
        <authorList>
            <person name="Zhao Y."/>
            <person name="Cao X."/>
            <person name="Guo M."/>
            <person name="Wang X."/>
            <person name="Yu T."/>
            <person name="Ye L."/>
            <person name="Han L."/>
            <person name="Hei L."/>
            <person name="Tao W."/>
            <person name="Tong Y."/>
            <person name="Xu Y."/>
            <person name="Zhong J."/>
        </authorList>
    </citation>
    <scope>FUNCTION</scope>
    <scope>INDUCTION BY HEPATITIS C VIRUS</scope>
    <scope>INTERACTION WITH HEPATITIS C VIRUS PROTEIN E1 (MICROBIAL INFECTION)</scope>
    <scope>SUBCELLULAR LOCATION</scope>
</reference>
<reference key="4">
    <citation type="journal article" date="2022" name="FASEB J.">
        <title>E3 ubiquitin ligase NEURL3 promotes innate antiviral response through catalyzing K63-linked ubiquitination of IRF7.</title>
        <authorList>
            <person name="Qi F."/>
            <person name="Zhang X."/>
            <person name="Wang L."/>
            <person name="Ren C."/>
            <person name="Zhao X."/>
            <person name="Luo J."/>
            <person name="Lu D."/>
        </authorList>
    </citation>
    <scope>FUNCTION</scope>
    <scope>CATALYTIC ACTIVITY</scope>
    <scope>SUBCELLULAR LOCATION</scope>
</reference>
<reference key="5">
    <citation type="journal article" date="2024" name="Cells">
        <title>The E3 Ubiquitin Protein Ligase LINCR Amplifies the TLR-Mediated Signals through Direct Degradation of MKP1.</title>
        <authorList>
            <person name="Yokosawa T."/>
            <person name="Miyagawa S."/>
            <person name="Suzuki W."/>
            <person name="Nada Y."/>
            <person name="Hirata Y."/>
            <person name="Noguchi T."/>
            <person name="Matsuzawa A."/>
        </authorList>
    </citation>
    <scope>FUNCTION</scope>
    <scope>CATALYTIC ACTIVITY</scope>
    <scope>MUTAGENESIS OF CYS-202 AND CYS-205</scope>
</reference>
<accession>Q96EH8</accession>
<protein>
    <recommendedName>
        <fullName>E3 ubiquitin-protein ligase NEURL3</fullName>
        <ecNumber evidence="5">2.3.2.27</ecNumber>
    </recommendedName>
    <alternativeName>
        <fullName>Lung-inducible neuralized-related C3CH4 RING domain protein</fullName>
    </alternativeName>
    <alternativeName>
        <fullName>Neuralized-like protein 3</fullName>
    </alternativeName>
    <alternativeName>
        <fullName evidence="6">RING-type E3 ubiquitin transferase NEURL3</fullName>
    </alternativeName>
</protein>
<organism>
    <name type="scientific">Homo sapiens</name>
    <name type="common">Human</name>
    <dbReference type="NCBI Taxonomy" id="9606"/>
    <lineage>
        <taxon>Eukaryota</taxon>
        <taxon>Metazoa</taxon>
        <taxon>Chordata</taxon>
        <taxon>Craniata</taxon>
        <taxon>Vertebrata</taxon>
        <taxon>Euteleostomi</taxon>
        <taxon>Mammalia</taxon>
        <taxon>Eutheria</taxon>
        <taxon>Euarchontoglires</taxon>
        <taxon>Primates</taxon>
        <taxon>Haplorrhini</taxon>
        <taxon>Catarrhini</taxon>
        <taxon>Hominidae</taxon>
        <taxon>Homo</taxon>
    </lineage>
</organism>
<evidence type="ECO:0000255" key="1">
    <source>
        <dbReference type="PROSITE-ProRule" id="PRU00175"/>
    </source>
</evidence>
<evidence type="ECO:0000255" key="2">
    <source>
        <dbReference type="PROSITE-ProRule" id="PRU00400"/>
    </source>
</evidence>
<evidence type="ECO:0000269" key="3">
    <source>
    </source>
</evidence>
<evidence type="ECO:0000269" key="4">
    <source>
    </source>
</evidence>
<evidence type="ECO:0000269" key="5">
    <source>
    </source>
</evidence>
<evidence type="ECO:0000305" key="6"/>
<comment type="function">
    <text evidence="3 4 5">E3 ubiquitin-protein ligase that plays a role in various biological processes such as lung development or innate immunity (PubMed:30111563). Seems to utilize UBE2E1. Promotes innate antiviral response by catalyzing 'Lys-63'-linked ubiquitination of IRF7 (PubMed:35792897). Also inhibits hepatitis C virus assembly by directly binding to viral E1 envelope glycoprotein to disrupt its interaction with E2 (PubMed:30111563). Plays an essential role in TLR4-mediated activation of MAPK pathways by promoting 'Lys-48'-linked polyubiquitination of the phosphatase DUSP1/MKP1 (PubMed:38667302).</text>
</comment>
<comment type="catalytic activity">
    <reaction evidence="4 5">
        <text>S-ubiquitinyl-[E2 ubiquitin-conjugating enzyme]-L-cysteine + [acceptor protein]-L-lysine = [E2 ubiquitin-conjugating enzyme]-L-cysteine + N(6)-ubiquitinyl-[acceptor protein]-L-lysine.</text>
        <dbReference type="EC" id="2.3.2.27"/>
    </reaction>
</comment>
<comment type="pathway">
    <text evidence="4">Protein modification; protein ubiquitination.</text>
</comment>
<comment type="subunit">
    <text evidence="3">(Microbial infection) Interacts with hepatitis C virus protein E1; this interaction prevents E1 interaction with E2 and subsequently inhibits viral infection.</text>
</comment>
<comment type="subcellular location">
    <subcellularLocation>
        <location evidence="3 4">Cytoplasm</location>
    </subcellularLocation>
</comment>
<comment type="induction">
    <text evidence="3">By hepatitis C virus.</text>
</comment>
<feature type="chain" id="PRO_0000325771" description="E3 ubiquitin-protein ligase NEURL3">
    <location>
        <begin position="1"/>
        <end position="262"/>
    </location>
</feature>
<feature type="domain" description="NHR" evidence="2">
    <location>
        <begin position="17"/>
        <end position="173"/>
    </location>
</feature>
<feature type="zinc finger region" description="RING-type" evidence="1">
    <location>
        <begin position="202"/>
        <end position="241"/>
    </location>
</feature>
<feature type="mutagenesis site" description="Complete loss of E3 ligase activity; when associated with S-205." evidence="5">
    <original>C</original>
    <variation>S</variation>
    <location>
        <position position="202"/>
    </location>
</feature>
<feature type="mutagenesis site" description="Complete loss of E3 ligase activity; when associated with S-202." evidence="5">
    <original>C</original>
    <variation>S</variation>
    <location>
        <position position="205"/>
    </location>
</feature>
<feature type="sequence conflict" description="In Ref. 2; AK311953." evidence="6" ref="2">
    <original>T</original>
    <variation>A</variation>
    <location>
        <position position="81"/>
    </location>
</feature>
<proteinExistence type="evidence at protein level"/>
<keyword id="KW-0963">Cytoplasm</keyword>
<keyword id="KW-0945">Host-virus interaction</keyword>
<keyword id="KW-0391">Immunity</keyword>
<keyword id="KW-0399">Innate immunity</keyword>
<keyword id="KW-0479">Metal-binding</keyword>
<keyword id="KW-1267">Proteomics identification</keyword>
<keyword id="KW-1185">Reference proteome</keyword>
<keyword id="KW-0808">Transferase</keyword>
<keyword id="KW-0833">Ubl conjugation pathway</keyword>
<keyword id="KW-0862">Zinc</keyword>
<keyword id="KW-0863">Zinc-finger</keyword>
<gene>
    <name type="primary">NEURL3</name>
    <name type="synonym">LINCR</name>
</gene>